<comment type="function">
    <text evidence="3">Plays an important role in the regulation of glutamine catabolism. Promotes mitochondrial respiration and increases ATP generation in cells by catalyzing the synthesis of glutamate and alpha-ketoglutarate. Increases cellular anti-oxidant function via NADH and glutathione production. May play a role in preventing tumor proliferation.</text>
</comment>
<comment type="catalytic activity">
    <reaction evidence="2">
        <text>L-glutamine + H2O = L-glutamate + NH4(+)</text>
        <dbReference type="Rhea" id="RHEA:15889"/>
        <dbReference type="ChEBI" id="CHEBI:15377"/>
        <dbReference type="ChEBI" id="CHEBI:28938"/>
        <dbReference type="ChEBI" id="CHEBI:29985"/>
        <dbReference type="ChEBI" id="CHEBI:58359"/>
        <dbReference type="EC" id="3.5.1.2"/>
    </reaction>
</comment>
<comment type="subunit">
    <text evidence="2 3">Homotetramer, dimer of dimers (By similarity). Does not assemble into higher oligomers (By similarity). Interacts with the PDZ domain of the syntrophin SNTA1. Interacts with the PDZ domain of TAX1BP3 (By similarity).</text>
</comment>
<comment type="subcellular location">
    <subcellularLocation>
        <location evidence="3">Mitochondrion</location>
    </subcellularLocation>
</comment>
<comment type="alternative products">
    <event type="alternative splicing"/>
    <isoform>
        <id>P28492-1</id>
        <name>1</name>
        <sequence type="displayed"/>
    </isoform>
    <isoform>
        <id>P28492-2</id>
        <name>2</name>
        <sequence type="described" ref="VSP_015534"/>
    </isoform>
</comment>
<comment type="tissue specificity">
    <text>Liver specific.</text>
</comment>
<comment type="similarity">
    <text evidence="7">Belongs to the glutaminase family.</text>
</comment>
<comment type="sequence caution" evidence="7">
    <conflict type="erroneous initiation">
        <sequence resource="EMBL-CDS" id="AAH89776"/>
    </conflict>
    <text>Extended N-terminus.</text>
</comment>
<gene>
    <name type="primary">Gls2</name>
    <name type="synonym">Ga</name>
</gene>
<protein>
    <recommendedName>
        <fullName>Glutaminase liver isoform, mitochondrial</fullName>
        <shortName>GLS</shortName>
        <ecNumber evidence="2">3.5.1.2</ecNumber>
    </recommendedName>
    <alternativeName>
        <fullName>L-glutaminase</fullName>
    </alternativeName>
    <alternativeName>
        <fullName>L-glutamine amidohydrolase</fullName>
    </alternativeName>
</protein>
<feature type="transit peptide" description="Mitochondrion" evidence="4">
    <location>
        <begin position="1"/>
        <end position="14"/>
    </location>
</feature>
<feature type="chain" id="PRO_0000011627" description="Glutaminase liver isoform, mitochondrial">
    <location>
        <begin position="15"/>
        <end position="602"/>
    </location>
</feature>
<feature type="repeat" description="ANK 1">
    <location>
        <begin position="518"/>
        <end position="551"/>
    </location>
</feature>
<feature type="repeat" description="ANK 2">
    <location>
        <begin position="552"/>
        <end position="585"/>
    </location>
</feature>
<feature type="region of interest" description="Disordered" evidence="5">
    <location>
        <begin position="1"/>
        <end position="28"/>
    </location>
</feature>
<feature type="region of interest" description="Disordered" evidence="5">
    <location>
        <begin position="46"/>
        <end position="67"/>
    </location>
</feature>
<feature type="binding site" evidence="1">
    <location>
        <position position="219"/>
    </location>
    <ligand>
        <name>substrate</name>
    </ligand>
</feature>
<feature type="binding site" evidence="1">
    <location>
        <position position="268"/>
    </location>
    <ligand>
        <name>substrate</name>
    </ligand>
</feature>
<feature type="binding site" evidence="1">
    <location>
        <position position="314"/>
    </location>
    <ligand>
        <name>substrate</name>
    </ligand>
</feature>
<feature type="binding site" evidence="1">
    <location>
        <position position="321"/>
    </location>
    <ligand>
        <name>substrate</name>
    </ligand>
</feature>
<feature type="binding site" evidence="1">
    <location>
        <position position="347"/>
    </location>
    <ligand>
        <name>substrate</name>
    </ligand>
</feature>
<feature type="binding site" evidence="1">
    <location>
        <position position="399"/>
    </location>
    <ligand>
        <name>substrate</name>
    </ligand>
</feature>
<feature type="binding site" evidence="1">
    <location>
        <position position="417"/>
    </location>
    <ligand>
        <name>substrate</name>
    </ligand>
</feature>
<feature type="modified residue" description="N6-succinyllysine" evidence="2">
    <location>
        <position position="253"/>
    </location>
</feature>
<feature type="modified residue" description="N6-acetyllysine" evidence="2">
    <location>
        <position position="279"/>
    </location>
</feature>
<feature type="modified residue" description="N6-acetyllysine" evidence="2">
    <location>
        <position position="284"/>
    </location>
</feature>
<feature type="modified residue" description="N6-acetyllysine" evidence="2">
    <location>
        <position position="329"/>
    </location>
</feature>
<feature type="splice variant" id="VSP_015534" description="In isoform 2." evidence="6">
    <location>
        <begin position="1"/>
        <end position="67"/>
    </location>
</feature>
<feature type="sequence conflict" description="In Ref. 1; AAC37708." evidence="7" ref="1">
    <original>L</original>
    <variation>V</variation>
    <location>
        <position position="76"/>
    </location>
</feature>
<feature type="sequence conflict" description="In Ref. 1." evidence="7" ref="1">
    <original>KG</original>
    <variation>NP</variation>
    <location>
        <begin position="336"/>
        <end position="337"/>
    </location>
</feature>
<reference key="1">
    <citation type="journal article" date="1997" name="Biochem. J.">
        <title>Rat hepatic glutaminase: identification of the full coding sequence and characterization of a functional promoter.</title>
        <authorList>
            <person name="Chung-Bok M.I."/>
            <person name="Vincent N."/>
            <person name="Jhala U."/>
            <person name="Watford M."/>
        </authorList>
    </citation>
    <scope>NUCLEOTIDE SEQUENCE [MRNA] (ISOFORM 2)</scope>
    <scope>NUCLEOTIDE SEQUENCE [GENOMIC DNA] OF 68-94</scope>
    <source>
        <tissue>Liver</tissue>
    </source>
</reference>
<reference key="2">
    <citation type="journal article" date="2004" name="Genome Res.">
        <title>The status, quality, and expansion of the NIH full-length cDNA project: the Mammalian Gene Collection (MGC).</title>
        <authorList>
            <consortium name="The MGC Project Team"/>
        </authorList>
    </citation>
    <scope>NUCLEOTIDE SEQUENCE [LARGE SCALE MRNA] (ISOFORM 1)</scope>
    <source>
        <tissue>Liver</tissue>
    </source>
</reference>
<reference key="3">
    <citation type="journal article" date="1990" name="J. Biol. Chem.">
        <title>Molecular cloning of a cDNA for rat hepatic glutaminase. Sequence similarity to kidney-type glutaminase.</title>
        <authorList>
            <person name="Smith E.M."/>
            <person name="Watford M."/>
        </authorList>
    </citation>
    <scope>PRELIMINARY NUCLEOTIDE SEQUENCE [MRNA] OF 147-602</scope>
    <source>
        <tissue>Liver</tissue>
    </source>
</reference>
<evidence type="ECO:0000250" key="1">
    <source>
        <dbReference type="UniProtKB" id="O94925"/>
    </source>
</evidence>
<evidence type="ECO:0000250" key="2">
    <source>
        <dbReference type="UniProtKB" id="Q571F8"/>
    </source>
</evidence>
<evidence type="ECO:0000250" key="3">
    <source>
        <dbReference type="UniProtKB" id="Q9UI32"/>
    </source>
</evidence>
<evidence type="ECO:0000255" key="4"/>
<evidence type="ECO:0000256" key="5">
    <source>
        <dbReference type="SAM" id="MobiDB-lite"/>
    </source>
</evidence>
<evidence type="ECO:0000303" key="6">
    <source>
    </source>
</evidence>
<evidence type="ECO:0000305" key="7"/>
<keyword id="KW-0007">Acetylation</keyword>
<keyword id="KW-0025">Alternative splicing</keyword>
<keyword id="KW-0040">ANK repeat</keyword>
<keyword id="KW-0378">Hydrolase</keyword>
<keyword id="KW-0496">Mitochondrion</keyword>
<keyword id="KW-1185">Reference proteome</keyword>
<keyword id="KW-0677">Repeat</keyword>
<keyword id="KW-0809">Transit peptide</keyword>
<sequence>MRSMRALQNALSRAGSHGQRGGWGHPSRGPLLGGGVRYYFGEAAAQGRGTPHSHQPQHSDHDASNSGMLPRLGDLLFYTIAEGQERIPIHKFTTALKATGLQTSDPRLQDCMSKMQRMVQESSSGGLLDRELFQKCVSSNIVLLTQAFRKKFVIPDFEEFTGHVDRIFEDAKELTGGKVAAYIPHLAKSNPDLWGVSLCTVDGQRHSVGHTKIPFCLQSCVKPLTYAISVSTLGTDYVHKFVGKEPSGLRYNKLSLNEEGIPHNPMVNAGAIVVSSLIKMDCNKAEKFDFVLQYLNKMAGNEFMGFSNATFQSEKETGDRNYAIGYYLKEKKCFPKGVDMMAALDLYFQLCSVEVTCESGSVMAATLANGGICPITGESVLSAEAVRNTLSLMHSCGMYDFSGQFAFHVGLPAKSAVSGAILLVVPNVMGMMCLSPPLDKLGNSHRGISFCQKLVSLFNFHNYDNLRHCARKLDPRREGGEVRNKTVVNLLFAAYSGDVSALRRFALSAVDMEQKDYDSRTALHVAAAEGHIDVVKFLIEACKVNPFVKDRWGNIPLDDAVQFNHLEVVKLLQDYHDSYMLSETQAEVAAETLSKENLESMV</sequence>
<organism>
    <name type="scientific">Rattus norvegicus</name>
    <name type="common">Rat</name>
    <dbReference type="NCBI Taxonomy" id="10116"/>
    <lineage>
        <taxon>Eukaryota</taxon>
        <taxon>Metazoa</taxon>
        <taxon>Chordata</taxon>
        <taxon>Craniata</taxon>
        <taxon>Vertebrata</taxon>
        <taxon>Euteleostomi</taxon>
        <taxon>Mammalia</taxon>
        <taxon>Eutheria</taxon>
        <taxon>Euarchontoglires</taxon>
        <taxon>Glires</taxon>
        <taxon>Rodentia</taxon>
        <taxon>Myomorpha</taxon>
        <taxon>Muroidea</taxon>
        <taxon>Muridae</taxon>
        <taxon>Murinae</taxon>
        <taxon>Rattus</taxon>
    </lineage>
</organism>
<accession>P28492</accession>
<accession>Q3MHS6</accession>
<accession>Q5FVU0</accession>
<accession>Q64606</accession>
<proteinExistence type="evidence at transcript level"/>
<dbReference type="EC" id="3.5.1.2" evidence="2"/>
<dbReference type="EMBL" id="J05499">
    <property type="protein sequence ID" value="AAC37707.1"/>
    <property type="molecule type" value="mRNA"/>
</dbReference>
<dbReference type="EMBL" id="L76175">
    <property type="protein sequence ID" value="AAC37708.1"/>
    <property type="molecule type" value="Genomic_DNA"/>
</dbReference>
<dbReference type="EMBL" id="BC089776">
    <property type="protein sequence ID" value="AAH89776.1"/>
    <property type="status" value="ALT_INIT"/>
    <property type="molecule type" value="mRNA"/>
</dbReference>
<dbReference type="EMBL" id="BC104712">
    <property type="protein sequence ID" value="AAI04713.1"/>
    <property type="molecule type" value="mRNA"/>
</dbReference>
<dbReference type="PIR" id="A35444">
    <property type="entry name" value="A35444"/>
</dbReference>
<dbReference type="RefSeq" id="NP_001257715.1">
    <molecule id="P28492-1"/>
    <property type="nucleotide sequence ID" value="NM_001270786.1"/>
</dbReference>
<dbReference type="RefSeq" id="NP_001257716.1">
    <property type="nucleotide sequence ID" value="NM_001270787.1"/>
</dbReference>
<dbReference type="RefSeq" id="NP_620259.2">
    <molecule id="P28492-2"/>
    <property type="nucleotide sequence ID" value="NM_138904.2"/>
</dbReference>
<dbReference type="RefSeq" id="XP_006240792.1">
    <molecule id="P28492-2"/>
    <property type="nucleotide sequence ID" value="XM_006240730.4"/>
</dbReference>
<dbReference type="SMR" id="P28492"/>
<dbReference type="BioGRID" id="251392">
    <property type="interactions" value="2"/>
</dbReference>
<dbReference type="FunCoup" id="P28492">
    <property type="interactions" value="178"/>
</dbReference>
<dbReference type="IntAct" id="P28492">
    <property type="interactions" value="1"/>
</dbReference>
<dbReference type="MINT" id="P28492"/>
<dbReference type="STRING" id="10116.ENSRNOP00000018737"/>
<dbReference type="PhosphoSitePlus" id="P28492"/>
<dbReference type="PaxDb" id="10116-ENSRNOP00000018737"/>
<dbReference type="GeneID" id="192268"/>
<dbReference type="KEGG" id="rno:192268"/>
<dbReference type="UCSC" id="RGD:620359">
    <molecule id="P28492-1"/>
    <property type="organism name" value="rat"/>
</dbReference>
<dbReference type="AGR" id="RGD:620359"/>
<dbReference type="CTD" id="27165"/>
<dbReference type="RGD" id="620359">
    <property type="gene designation" value="Gls2"/>
</dbReference>
<dbReference type="eggNOG" id="KOG0506">
    <property type="taxonomic scope" value="Eukaryota"/>
</dbReference>
<dbReference type="HOGENOM" id="CLU_016439_1_0_1"/>
<dbReference type="InParanoid" id="P28492"/>
<dbReference type="OrthoDB" id="9995210at2759"/>
<dbReference type="PhylomeDB" id="P28492"/>
<dbReference type="TreeFam" id="TF313359"/>
<dbReference type="BioCyc" id="MetaCyc:MONOMER-13074"/>
<dbReference type="Reactome" id="R-RNO-210500">
    <property type="pathway name" value="Glutamate Neurotransmitter Release Cycle"/>
</dbReference>
<dbReference type="Reactome" id="R-RNO-5628897">
    <property type="pathway name" value="TP53 Regulates Metabolic Genes"/>
</dbReference>
<dbReference type="Reactome" id="R-RNO-8964539">
    <property type="pathway name" value="Glutamate and glutamine metabolism"/>
</dbReference>
<dbReference type="SABIO-RK" id="P28492"/>
<dbReference type="PRO" id="PR:P28492"/>
<dbReference type="Proteomes" id="UP000002494">
    <property type="component" value="Unplaced"/>
</dbReference>
<dbReference type="GO" id="GO:0005759">
    <property type="term" value="C:mitochondrial matrix"/>
    <property type="evidence" value="ECO:0000304"/>
    <property type="project" value="RGD"/>
</dbReference>
<dbReference type="GO" id="GO:0005739">
    <property type="term" value="C:mitochondrion"/>
    <property type="evidence" value="ECO:0000266"/>
    <property type="project" value="RGD"/>
</dbReference>
<dbReference type="GO" id="GO:0004359">
    <property type="term" value="F:glutaminase activity"/>
    <property type="evidence" value="ECO:0000318"/>
    <property type="project" value="GO_Central"/>
</dbReference>
<dbReference type="GO" id="GO:0006537">
    <property type="term" value="P:glutamate biosynthetic process"/>
    <property type="evidence" value="ECO:0000318"/>
    <property type="project" value="GO_Central"/>
</dbReference>
<dbReference type="GO" id="GO:0006543">
    <property type="term" value="P:glutamine catabolic process"/>
    <property type="evidence" value="ECO:0000318"/>
    <property type="project" value="GO_Central"/>
</dbReference>
<dbReference type="GO" id="GO:0072593">
    <property type="term" value="P:reactive oxygen species metabolic process"/>
    <property type="evidence" value="ECO:0000266"/>
    <property type="project" value="RGD"/>
</dbReference>
<dbReference type="GO" id="GO:0042981">
    <property type="term" value="P:regulation of apoptotic process"/>
    <property type="evidence" value="ECO:0000266"/>
    <property type="project" value="RGD"/>
</dbReference>
<dbReference type="FunFam" id="1.10.238.210:FF:000001">
    <property type="entry name" value="Glutaminase kidney isoform, mitochondrial"/>
    <property type="match status" value="1"/>
</dbReference>
<dbReference type="FunFam" id="3.40.710.10:FF:000002">
    <property type="entry name" value="glutaminase kidney isoform, mitochondrial"/>
    <property type="match status" value="1"/>
</dbReference>
<dbReference type="FunFam" id="1.25.40.20:FF:000019">
    <property type="entry name" value="Glutaminase liver isoform, mitochondrial"/>
    <property type="match status" value="1"/>
</dbReference>
<dbReference type="Gene3D" id="1.10.238.210">
    <property type="match status" value="1"/>
</dbReference>
<dbReference type="Gene3D" id="1.25.40.20">
    <property type="entry name" value="Ankyrin repeat-containing domain"/>
    <property type="match status" value="1"/>
</dbReference>
<dbReference type="Gene3D" id="3.40.710.10">
    <property type="entry name" value="DD-peptidase/beta-lactamase superfamily"/>
    <property type="match status" value="1"/>
</dbReference>
<dbReference type="HAMAP" id="MF_00313">
    <property type="entry name" value="Glutaminase"/>
    <property type="match status" value="1"/>
</dbReference>
<dbReference type="InterPro" id="IPR002110">
    <property type="entry name" value="Ankyrin_rpt"/>
</dbReference>
<dbReference type="InterPro" id="IPR036770">
    <property type="entry name" value="Ankyrin_rpt-contain_sf"/>
</dbReference>
<dbReference type="InterPro" id="IPR012338">
    <property type="entry name" value="Beta-lactam/transpept-like"/>
</dbReference>
<dbReference type="InterPro" id="IPR015868">
    <property type="entry name" value="Glutaminase"/>
</dbReference>
<dbReference type="InterPro" id="IPR041541">
    <property type="entry name" value="Glutaminase_EF-hand"/>
</dbReference>
<dbReference type="NCBIfam" id="TIGR03814">
    <property type="entry name" value="Gln_ase"/>
    <property type="match status" value="1"/>
</dbReference>
<dbReference type="PANTHER" id="PTHR12544">
    <property type="entry name" value="GLUTAMINASE"/>
    <property type="match status" value="1"/>
</dbReference>
<dbReference type="PANTHER" id="PTHR12544:SF33">
    <property type="entry name" value="GLUTAMINASE LIVER ISOFORM, MITOCHONDRIAL"/>
    <property type="match status" value="1"/>
</dbReference>
<dbReference type="Pfam" id="PF12796">
    <property type="entry name" value="Ank_2"/>
    <property type="match status" value="1"/>
</dbReference>
<dbReference type="Pfam" id="PF17959">
    <property type="entry name" value="EF-hand_14"/>
    <property type="match status" value="1"/>
</dbReference>
<dbReference type="Pfam" id="PF04960">
    <property type="entry name" value="Glutaminase"/>
    <property type="match status" value="1"/>
</dbReference>
<dbReference type="SMART" id="SM00248">
    <property type="entry name" value="ANK"/>
    <property type="match status" value="2"/>
</dbReference>
<dbReference type="SUPFAM" id="SSF48403">
    <property type="entry name" value="Ankyrin repeat"/>
    <property type="match status" value="1"/>
</dbReference>
<dbReference type="SUPFAM" id="SSF56601">
    <property type="entry name" value="beta-lactamase/transpeptidase-like"/>
    <property type="match status" value="1"/>
</dbReference>
<dbReference type="PROSITE" id="PS50297">
    <property type="entry name" value="ANK_REP_REGION"/>
    <property type="match status" value="1"/>
</dbReference>
<dbReference type="PROSITE" id="PS50088">
    <property type="entry name" value="ANK_REPEAT"/>
    <property type="match status" value="1"/>
</dbReference>
<name>GLSL_RAT</name>